<reference key="1">
    <citation type="journal article" date="2004" name="PLoS Biol.">
        <title>Genomic insights into methanotrophy: the complete genome sequence of Methylococcus capsulatus (Bath).</title>
        <authorList>
            <person name="Ward N.L."/>
            <person name="Larsen O."/>
            <person name="Sakwa J."/>
            <person name="Bruseth L."/>
            <person name="Khouri H.M."/>
            <person name="Durkin A.S."/>
            <person name="Dimitrov G."/>
            <person name="Jiang L."/>
            <person name="Scanlan D."/>
            <person name="Kang K.H."/>
            <person name="Lewis M.R."/>
            <person name="Nelson K.E."/>
            <person name="Methe B.A."/>
            <person name="Wu M."/>
            <person name="Heidelberg J.F."/>
            <person name="Paulsen I.T."/>
            <person name="Fouts D.E."/>
            <person name="Ravel J."/>
            <person name="Tettelin H."/>
            <person name="Ren Q."/>
            <person name="Read T.D."/>
            <person name="DeBoy R.T."/>
            <person name="Seshadri R."/>
            <person name="Salzberg S.L."/>
            <person name="Jensen H.B."/>
            <person name="Birkeland N.K."/>
            <person name="Nelson W.C."/>
            <person name="Dodson R.J."/>
            <person name="Grindhaug S.H."/>
            <person name="Holt I.E."/>
            <person name="Eidhammer I."/>
            <person name="Jonasen I."/>
            <person name="Vanaken S."/>
            <person name="Utterback T.R."/>
            <person name="Feldblyum T.V."/>
            <person name="Fraser C.M."/>
            <person name="Lillehaug J.R."/>
            <person name="Eisen J.A."/>
        </authorList>
    </citation>
    <scope>NUCLEOTIDE SEQUENCE [LARGE SCALE GENOMIC DNA]</scope>
    <source>
        <strain>ATCC 33009 / NCIMB 11132 / Bath</strain>
    </source>
</reference>
<evidence type="ECO:0000255" key="1">
    <source>
        <dbReference type="HAMAP-Rule" id="MF_01677"/>
    </source>
</evidence>
<evidence type="ECO:0000305" key="2"/>
<accession>Q60AP7</accession>
<proteinExistence type="inferred from homology"/>
<comment type="function">
    <text evidence="1">Catalyzes the dehydration of methylthioribulose-1-phosphate (MTRu-1-P) into 2,3-diketo-5-methylthiopentyl-1-phosphate (DK-MTP-1-P).</text>
</comment>
<comment type="catalytic activity">
    <reaction evidence="1">
        <text>5-(methylsulfanyl)-D-ribulose 1-phosphate = 5-methylsulfanyl-2,3-dioxopentyl phosphate + H2O</text>
        <dbReference type="Rhea" id="RHEA:15549"/>
        <dbReference type="ChEBI" id="CHEBI:15377"/>
        <dbReference type="ChEBI" id="CHEBI:58548"/>
        <dbReference type="ChEBI" id="CHEBI:58828"/>
        <dbReference type="EC" id="4.2.1.109"/>
    </reaction>
</comment>
<comment type="cofactor">
    <cofactor evidence="1">
        <name>Zn(2+)</name>
        <dbReference type="ChEBI" id="CHEBI:29105"/>
    </cofactor>
    <text evidence="1">Binds 1 zinc ion per subunit.</text>
</comment>
<comment type="pathway">
    <text evidence="1">Amino-acid biosynthesis; L-methionine biosynthesis via salvage pathway; L-methionine from S-methyl-5-thio-alpha-D-ribose 1-phosphate: step 2/6.</text>
</comment>
<comment type="similarity">
    <text evidence="1">Belongs to the aldolase class II family. MtnB subfamily.</text>
</comment>
<comment type="sequence caution" evidence="2">
    <conflict type="erroneous initiation">
        <sequence resource="EMBL-CDS" id="AAU92900"/>
    </conflict>
</comment>
<protein>
    <recommendedName>
        <fullName evidence="1">Methylthioribulose-1-phosphate dehydratase</fullName>
        <shortName evidence="1">MTRu-1-P dehydratase</shortName>
        <ecNumber evidence="1">4.2.1.109</ecNumber>
    </recommendedName>
</protein>
<organism>
    <name type="scientific">Methylococcus capsulatus (strain ATCC 33009 / NCIMB 11132 / Bath)</name>
    <dbReference type="NCBI Taxonomy" id="243233"/>
    <lineage>
        <taxon>Bacteria</taxon>
        <taxon>Pseudomonadati</taxon>
        <taxon>Pseudomonadota</taxon>
        <taxon>Gammaproteobacteria</taxon>
        <taxon>Methylococcales</taxon>
        <taxon>Methylococcaceae</taxon>
        <taxon>Methylococcus</taxon>
    </lineage>
</organism>
<feature type="chain" id="PRO_0000357093" description="Methylthioribulose-1-phosphate dehydratase">
    <location>
        <begin position="1"/>
        <end position="204"/>
    </location>
</feature>
<feature type="binding site" evidence="1">
    <location>
        <position position="96"/>
    </location>
    <ligand>
        <name>Zn(2+)</name>
        <dbReference type="ChEBI" id="CHEBI:29105"/>
    </ligand>
</feature>
<feature type="binding site" evidence="1">
    <location>
        <position position="98"/>
    </location>
    <ligand>
        <name>Zn(2+)</name>
        <dbReference type="ChEBI" id="CHEBI:29105"/>
    </ligand>
</feature>
<gene>
    <name evidence="1" type="primary">mtnB</name>
    <name type="ordered locus">MCA0799</name>
</gene>
<sequence length="204" mass="22648">MHDTEFETRAAELIEAGRFIDGRGWVPATSGNFSARLGDGRIAITVSGRHKGRLRPEDIMLVDAAGRSLDGRKPSAETLLHTGIYRRYPEAHAVLHPHSPASTLLSRLVSGAVILEDYELLKALAGIDTHATRIVVPVFPNDQDIPRLALKIEEYLVRHDGVHAYIIAGHGFYTWGKSVADALRHVEALEYLFDLETRMHGVKR</sequence>
<keyword id="KW-0028">Amino-acid biosynthesis</keyword>
<keyword id="KW-0456">Lyase</keyword>
<keyword id="KW-0479">Metal-binding</keyword>
<keyword id="KW-0486">Methionine biosynthesis</keyword>
<keyword id="KW-1185">Reference proteome</keyword>
<keyword id="KW-0862">Zinc</keyword>
<name>MTNB_METCA</name>
<dbReference type="EC" id="4.2.1.109" evidence="1"/>
<dbReference type="EMBL" id="AE017282">
    <property type="protein sequence ID" value="AAU92900.1"/>
    <property type="status" value="ALT_INIT"/>
    <property type="molecule type" value="Genomic_DNA"/>
</dbReference>
<dbReference type="RefSeq" id="WP_010960125.1">
    <property type="nucleotide sequence ID" value="NC_002977.6"/>
</dbReference>
<dbReference type="SMR" id="Q60AP7"/>
<dbReference type="STRING" id="243233.MCA0799"/>
<dbReference type="GeneID" id="88223112"/>
<dbReference type="KEGG" id="mca:MCA0799"/>
<dbReference type="eggNOG" id="COG0235">
    <property type="taxonomic scope" value="Bacteria"/>
</dbReference>
<dbReference type="HOGENOM" id="CLU_006033_4_1_6"/>
<dbReference type="UniPathway" id="UPA00904">
    <property type="reaction ID" value="UER00875"/>
</dbReference>
<dbReference type="Proteomes" id="UP000006821">
    <property type="component" value="Chromosome"/>
</dbReference>
<dbReference type="GO" id="GO:0005829">
    <property type="term" value="C:cytosol"/>
    <property type="evidence" value="ECO:0007669"/>
    <property type="project" value="TreeGrafter"/>
</dbReference>
<dbReference type="GO" id="GO:0016832">
    <property type="term" value="F:aldehyde-lyase activity"/>
    <property type="evidence" value="ECO:0007669"/>
    <property type="project" value="TreeGrafter"/>
</dbReference>
<dbReference type="GO" id="GO:0046570">
    <property type="term" value="F:methylthioribulose 1-phosphate dehydratase activity"/>
    <property type="evidence" value="ECO:0007669"/>
    <property type="project" value="UniProtKB-UniRule"/>
</dbReference>
<dbReference type="GO" id="GO:0008270">
    <property type="term" value="F:zinc ion binding"/>
    <property type="evidence" value="ECO:0007669"/>
    <property type="project" value="UniProtKB-UniRule"/>
</dbReference>
<dbReference type="GO" id="GO:0019509">
    <property type="term" value="P:L-methionine salvage from methylthioadenosine"/>
    <property type="evidence" value="ECO:0007669"/>
    <property type="project" value="UniProtKB-UniRule"/>
</dbReference>
<dbReference type="GO" id="GO:0019323">
    <property type="term" value="P:pentose catabolic process"/>
    <property type="evidence" value="ECO:0007669"/>
    <property type="project" value="TreeGrafter"/>
</dbReference>
<dbReference type="Gene3D" id="3.40.225.10">
    <property type="entry name" value="Class II aldolase/adducin N-terminal domain"/>
    <property type="match status" value="1"/>
</dbReference>
<dbReference type="HAMAP" id="MF_01677">
    <property type="entry name" value="Salvage_MtnB"/>
    <property type="match status" value="1"/>
</dbReference>
<dbReference type="InterPro" id="IPR050197">
    <property type="entry name" value="Aldolase_class_II_sugar_metab"/>
</dbReference>
<dbReference type="InterPro" id="IPR001303">
    <property type="entry name" value="Aldolase_II/adducin_N"/>
</dbReference>
<dbReference type="InterPro" id="IPR036409">
    <property type="entry name" value="Aldolase_II/adducin_N_sf"/>
</dbReference>
<dbReference type="InterPro" id="IPR017714">
    <property type="entry name" value="MethylthioRu-1-P_deHdtase_MtnB"/>
</dbReference>
<dbReference type="NCBIfam" id="NF006672">
    <property type="entry name" value="PRK09220.1"/>
    <property type="match status" value="1"/>
</dbReference>
<dbReference type="NCBIfam" id="TIGR03328">
    <property type="entry name" value="salvage_mtnB"/>
    <property type="match status" value="1"/>
</dbReference>
<dbReference type="PANTHER" id="PTHR22789:SF0">
    <property type="entry name" value="3-OXO-TETRONATE 4-PHOSPHATE DECARBOXYLASE-RELATED"/>
    <property type="match status" value="1"/>
</dbReference>
<dbReference type="PANTHER" id="PTHR22789">
    <property type="entry name" value="FUCULOSE PHOSPHATE ALDOLASE"/>
    <property type="match status" value="1"/>
</dbReference>
<dbReference type="Pfam" id="PF00596">
    <property type="entry name" value="Aldolase_II"/>
    <property type="match status" value="1"/>
</dbReference>
<dbReference type="SMART" id="SM01007">
    <property type="entry name" value="Aldolase_II"/>
    <property type="match status" value="1"/>
</dbReference>
<dbReference type="SUPFAM" id="SSF53639">
    <property type="entry name" value="AraD/HMP-PK domain-like"/>
    <property type="match status" value="1"/>
</dbReference>